<gene>
    <name evidence="1" type="primary">ndhB2</name>
    <name type="ordered locus">LopeCp125</name>
</gene>
<sequence>MIWHVQNENFILDSTRIFMKAFHLLLFNGSFIFPECILIFGLILLLMIDSTSDQKDRPWFYFISSTSLVISITALLFRWREEPIISFSGNFQTNNFNEIFQFLILLCSTLCIPLSVEYIECTEMAITEFLLFILTATLGGMFLCGANDLITIFVAPECFSLCSYLLSGYTKRDLRSNEATMKYLLMGGASSSILVHGFSWLYGSSGGEIELQEIVNGLINTQMYNSPGISIALISITVGLGFKLSPAPFHQWTPDVYEGSPTPVVAFLSVTSKVAASASATRILDIPFYFSSNEWHLLLEILAILSMILGNLLAITQTSMKRMLAYSSIGQIGYVIIGIIVGDSNDGYASMITYMLFYISMNLGTFACIVLFGLRTGTDNIRDYAGLYTKDPFLALSLALCLLSLGGLPPLAGFFGKLYLFWCGWQAGLYFLVSIGLLTSVLSIYYYLKIIKLLMTGRNQEITPYVRNYRRSPLRSNNSIELSMTVCVIASTLPGISMNPILAIAQDTLF</sequence>
<comment type="function">
    <text evidence="1">NDH shuttles electrons from NAD(P)H:plastoquinone, via FMN and iron-sulfur (Fe-S) centers, to quinones in the photosynthetic chain and possibly in a chloroplast respiratory chain. The immediate electron acceptor for the enzyme in this species is believed to be plastoquinone. Couples the redox reaction to proton translocation, and thus conserves the redox energy in a proton gradient.</text>
</comment>
<comment type="catalytic activity">
    <reaction evidence="1">
        <text>a plastoquinone + NADH + (n+1) H(+)(in) = a plastoquinol + NAD(+) + n H(+)(out)</text>
        <dbReference type="Rhea" id="RHEA:42608"/>
        <dbReference type="Rhea" id="RHEA-COMP:9561"/>
        <dbReference type="Rhea" id="RHEA-COMP:9562"/>
        <dbReference type="ChEBI" id="CHEBI:15378"/>
        <dbReference type="ChEBI" id="CHEBI:17757"/>
        <dbReference type="ChEBI" id="CHEBI:57540"/>
        <dbReference type="ChEBI" id="CHEBI:57945"/>
        <dbReference type="ChEBI" id="CHEBI:62192"/>
    </reaction>
</comment>
<comment type="catalytic activity">
    <reaction evidence="1">
        <text>a plastoquinone + NADPH + (n+1) H(+)(in) = a plastoquinol + NADP(+) + n H(+)(out)</text>
        <dbReference type="Rhea" id="RHEA:42612"/>
        <dbReference type="Rhea" id="RHEA-COMP:9561"/>
        <dbReference type="Rhea" id="RHEA-COMP:9562"/>
        <dbReference type="ChEBI" id="CHEBI:15378"/>
        <dbReference type="ChEBI" id="CHEBI:17757"/>
        <dbReference type="ChEBI" id="CHEBI:57783"/>
        <dbReference type="ChEBI" id="CHEBI:58349"/>
        <dbReference type="ChEBI" id="CHEBI:62192"/>
    </reaction>
</comment>
<comment type="subunit">
    <text evidence="1">NDH is composed of at least 16 different subunits, 5 of which are encoded in the nucleus.</text>
</comment>
<comment type="subcellular location">
    <subcellularLocation>
        <location evidence="1">Plastid</location>
        <location evidence="1">Chloroplast thylakoid membrane</location>
        <topology evidence="1">Multi-pass membrane protein</topology>
    </subcellularLocation>
</comment>
<comment type="similarity">
    <text evidence="1">Belongs to the complex I subunit 2 family.</text>
</comment>
<feature type="chain" id="PRO_0000391281" description="NAD(P)H-quinone oxidoreductase subunit 2 B, chloroplastic">
    <location>
        <begin position="1"/>
        <end position="510"/>
    </location>
</feature>
<feature type="transmembrane region" description="Helical" evidence="1">
    <location>
        <begin position="24"/>
        <end position="44"/>
    </location>
</feature>
<feature type="transmembrane region" description="Helical" evidence="1">
    <location>
        <begin position="59"/>
        <end position="79"/>
    </location>
</feature>
<feature type="transmembrane region" description="Helical" evidence="1">
    <location>
        <begin position="99"/>
        <end position="119"/>
    </location>
</feature>
<feature type="transmembrane region" description="Helical" evidence="1">
    <location>
        <begin position="124"/>
        <end position="144"/>
    </location>
</feature>
<feature type="transmembrane region" description="Helical" evidence="1">
    <location>
        <begin position="149"/>
        <end position="169"/>
    </location>
</feature>
<feature type="transmembrane region" description="Helical" evidence="1">
    <location>
        <begin position="183"/>
        <end position="203"/>
    </location>
</feature>
<feature type="transmembrane region" description="Helical" evidence="1">
    <location>
        <begin position="229"/>
        <end position="249"/>
    </location>
</feature>
<feature type="transmembrane region" description="Helical" evidence="1">
    <location>
        <begin position="295"/>
        <end position="315"/>
    </location>
</feature>
<feature type="transmembrane region" description="Helical" evidence="1">
    <location>
        <begin position="323"/>
        <end position="343"/>
    </location>
</feature>
<feature type="transmembrane region" description="Helical" evidence="1">
    <location>
        <begin position="354"/>
        <end position="374"/>
    </location>
</feature>
<feature type="transmembrane region" description="Helical" evidence="1">
    <location>
        <begin position="395"/>
        <end position="415"/>
    </location>
</feature>
<feature type="transmembrane region" description="Helical" evidence="1">
    <location>
        <begin position="418"/>
        <end position="438"/>
    </location>
</feature>
<keyword id="KW-0150">Chloroplast</keyword>
<keyword id="KW-0472">Membrane</keyword>
<keyword id="KW-0520">NAD</keyword>
<keyword id="KW-0521">NADP</keyword>
<keyword id="KW-0934">Plastid</keyword>
<keyword id="KW-0618">Plastoquinone</keyword>
<keyword id="KW-0874">Quinone</keyword>
<keyword id="KW-0793">Thylakoid</keyword>
<keyword id="KW-1278">Translocase</keyword>
<keyword id="KW-0812">Transmembrane</keyword>
<keyword id="KW-1133">Transmembrane helix</keyword>
<keyword id="KW-0813">Transport</keyword>
<geneLocation type="chloroplast"/>
<dbReference type="EC" id="7.1.1.-" evidence="1"/>
<dbReference type="EMBL" id="AM777385">
    <property type="protein sequence ID" value="CAO86035.1"/>
    <property type="molecule type" value="Genomic_DNA"/>
</dbReference>
<dbReference type="SMR" id="P0CC87"/>
<dbReference type="KEGG" id="lper:5696562"/>
<dbReference type="KEGG" id="lper:5696583"/>
<dbReference type="GO" id="GO:0009535">
    <property type="term" value="C:chloroplast thylakoid membrane"/>
    <property type="evidence" value="ECO:0007669"/>
    <property type="project" value="UniProtKB-SubCell"/>
</dbReference>
<dbReference type="GO" id="GO:0008137">
    <property type="term" value="F:NADH dehydrogenase (ubiquinone) activity"/>
    <property type="evidence" value="ECO:0007669"/>
    <property type="project" value="InterPro"/>
</dbReference>
<dbReference type="GO" id="GO:0048038">
    <property type="term" value="F:quinone binding"/>
    <property type="evidence" value="ECO:0007669"/>
    <property type="project" value="UniProtKB-KW"/>
</dbReference>
<dbReference type="GO" id="GO:0042773">
    <property type="term" value="P:ATP synthesis coupled electron transport"/>
    <property type="evidence" value="ECO:0007669"/>
    <property type="project" value="InterPro"/>
</dbReference>
<dbReference type="GO" id="GO:0019684">
    <property type="term" value="P:photosynthesis, light reaction"/>
    <property type="evidence" value="ECO:0007669"/>
    <property type="project" value="UniProtKB-UniRule"/>
</dbReference>
<dbReference type="HAMAP" id="MF_00445">
    <property type="entry name" value="NDH1_NuoN_1"/>
    <property type="match status" value="1"/>
</dbReference>
<dbReference type="InterPro" id="IPR010096">
    <property type="entry name" value="NADH-Q_OxRdtase_suN/2"/>
</dbReference>
<dbReference type="InterPro" id="IPR001750">
    <property type="entry name" value="ND/Mrp_TM"/>
</dbReference>
<dbReference type="InterPro" id="IPR045693">
    <property type="entry name" value="Ndh2_N"/>
</dbReference>
<dbReference type="NCBIfam" id="TIGR01770">
    <property type="entry name" value="NDH_I_N"/>
    <property type="match status" value="1"/>
</dbReference>
<dbReference type="NCBIfam" id="NF002701">
    <property type="entry name" value="PRK02504.1"/>
    <property type="match status" value="1"/>
</dbReference>
<dbReference type="PANTHER" id="PTHR22773">
    <property type="entry name" value="NADH DEHYDROGENASE"/>
    <property type="match status" value="1"/>
</dbReference>
<dbReference type="Pfam" id="PF19530">
    <property type="entry name" value="Ndh2_N"/>
    <property type="match status" value="1"/>
</dbReference>
<dbReference type="Pfam" id="PF00361">
    <property type="entry name" value="Proton_antipo_M"/>
    <property type="match status" value="1"/>
</dbReference>
<dbReference type="PRINTS" id="PR01434">
    <property type="entry name" value="NADHDHGNASE5"/>
</dbReference>
<evidence type="ECO:0000255" key="1">
    <source>
        <dbReference type="HAMAP-Rule" id="MF_00445"/>
    </source>
</evidence>
<name>NU2C2_LOLPR</name>
<reference key="1">
    <citation type="journal article" date="2008" name="PLoS ONE">
        <title>An optimized chloroplast DNA extraction protocol for grasses (Poaceae) proves suitable for whole plastid genome sequencing and SNP detection.</title>
        <authorList>
            <person name="Diekmann K."/>
            <person name="Hodkinson T.R."/>
            <person name="Fricke E."/>
            <person name="Barth S."/>
        </authorList>
    </citation>
    <scope>NUCLEOTIDE SEQUENCE [LARGE SCALE GENOMIC DNA]</scope>
    <source>
        <strain>cv. Cashel</strain>
    </source>
</reference>
<accession>P0CC87</accession>
<accession>A8Y9D0</accession>
<protein>
    <recommendedName>
        <fullName evidence="1">NAD(P)H-quinone oxidoreductase subunit 2 B, chloroplastic</fullName>
        <ecNumber evidence="1">7.1.1.-</ecNumber>
    </recommendedName>
    <alternativeName>
        <fullName evidence="1">NAD(P)H dehydrogenase, subunit 2 B</fullName>
    </alternativeName>
    <alternativeName>
        <fullName evidence="1">NADH-plastoquinone oxidoreductase subunit 2 B</fullName>
    </alternativeName>
</protein>
<proteinExistence type="inferred from homology"/>
<organism>
    <name type="scientific">Lolium perenne</name>
    <name type="common">Perennial ryegrass</name>
    <dbReference type="NCBI Taxonomy" id="4522"/>
    <lineage>
        <taxon>Eukaryota</taxon>
        <taxon>Viridiplantae</taxon>
        <taxon>Streptophyta</taxon>
        <taxon>Embryophyta</taxon>
        <taxon>Tracheophyta</taxon>
        <taxon>Spermatophyta</taxon>
        <taxon>Magnoliopsida</taxon>
        <taxon>Liliopsida</taxon>
        <taxon>Poales</taxon>
        <taxon>Poaceae</taxon>
        <taxon>BOP clade</taxon>
        <taxon>Pooideae</taxon>
        <taxon>Poodae</taxon>
        <taxon>Poeae</taxon>
        <taxon>Poeae Chloroplast Group 2 (Poeae type)</taxon>
        <taxon>Loliodinae</taxon>
        <taxon>Loliinae</taxon>
        <taxon>Lolium</taxon>
    </lineage>
</organism>